<feature type="chain" id="PRO_0000400191" description="1D-myo-inositol 2-acetamido-2-deoxy-alpha-D-glucopyranoside deacetylase">
    <location>
        <begin position="1"/>
        <end position="303"/>
    </location>
</feature>
<feature type="binding site" evidence="1">
    <location>
        <position position="15"/>
    </location>
    <ligand>
        <name>Zn(2+)</name>
        <dbReference type="ChEBI" id="CHEBI:29105"/>
    </ligand>
</feature>
<feature type="binding site" evidence="1">
    <location>
        <position position="18"/>
    </location>
    <ligand>
        <name>Zn(2+)</name>
        <dbReference type="ChEBI" id="CHEBI:29105"/>
    </ligand>
</feature>
<feature type="binding site" evidence="1">
    <location>
        <position position="157"/>
    </location>
    <ligand>
        <name>Zn(2+)</name>
        <dbReference type="ChEBI" id="CHEBI:29105"/>
    </ligand>
</feature>
<gene>
    <name evidence="1" type="primary">mshB</name>
    <name type="ordered locus">Kfla_5531</name>
</gene>
<name>MSHB_KRIFD</name>
<comment type="function">
    <text evidence="1">Catalyzes the deacetylation of 1D-myo-inositol 2-acetamido-2-deoxy-alpha-D-glucopyranoside (GlcNAc-Ins) in the mycothiol biosynthesis pathway.</text>
</comment>
<comment type="catalytic activity">
    <reaction evidence="1">
        <text>1D-myo-inositol 2-acetamido-2-deoxy-alpha-D-glucopyranoside + H2O = 1D-myo-inositol 2-amino-2-deoxy-alpha-D-glucopyranoside + acetate</text>
        <dbReference type="Rhea" id="RHEA:26180"/>
        <dbReference type="ChEBI" id="CHEBI:15377"/>
        <dbReference type="ChEBI" id="CHEBI:30089"/>
        <dbReference type="ChEBI" id="CHEBI:52442"/>
        <dbReference type="ChEBI" id="CHEBI:58886"/>
        <dbReference type="EC" id="3.5.1.103"/>
    </reaction>
</comment>
<comment type="cofactor">
    <cofactor evidence="1">
        <name>Zn(2+)</name>
        <dbReference type="ChEBI" id="CHEBI:29105"/>
    </cofactor>
    <text evidence="1">Binds 1 zinc ion per subunit.</text>
</comment>
<comment type="similarity">
    <text evidence="1">Belongs to the MshB deacetylase family.</text>
</comment>
<sequence>MSELPDRRLLLVHAHPDDETINNGATMARYVAEGAHVTLVTCTLGEEGEVLVPELAHLAADQSDQLGRHRIGELAAAMDELGVTDHRFLGGPGRYRDTGMIYDEQGNAAVPPDTRPDSFWQADLVTAANDLVTVIREVRPQVLVTYDEFGNYGHPDHVQAHRVATYAAALAAARSYREDLGPAWDIPKIYWTAISETAMRSSLRRLRESGDHTTFEGMDPDGPLGPMITPDRFIDCVIPADGYLDRKMNAMKAHATQITVDGPFFALSNNDGNEIFGDEFYRLVKGTAAPGSDGLEHDLFAGL</sequence>
<keyword id="KW-0378">Hydrolase</keyword>
<keyword id="KW-0479">Metal-binding</keyword>
<keyword id="KW-1185">Reference proteome</keyword>
<keyword id="KW-0862">Zinc</keyword>
<reference key="1">
    <citation type="submission" date="2009-09" db="EMBL/GenBank/DDBJ databases">
        <title>The complete genome of Kribbella flavida DSM 17836.</title>
        <authorList>
            <consortium name="US DOE Joint Genome Institute (JGI-PGF)"/>
            <person name="Lucas S."/>
            <person name="Copeland A."/>
            <person name="Lapidus A."/>
            <person name="Glavina del Rio T."/>
            <person name="Dalin E."/>
            <person name="Tice H."/>
            <person name="Bruce D."/>
            <person name="Goodwin L."/>
            <person name="Pitluck S."/>
            <person name="Kyrpides N."/>
            <person name="Mavromatis K."/>
            <person name="Ivanova N."/>
            <person name="Saunders E."/>
            <person name="Brettin T."/>
            <person name="Detter J.C."/>
            <person name="Han C."/>
            <person name="Larimer F."/>
            <person name="Land M."/>
            <person name="Hauser L."/>
            <person name="Markowitz V."/>
            <person name="Cheng J.-F."/>
            <person name="Hugenholtz P."/>
            <person name="Woyke T."/>
            <person name="Wu D."/>
            <person name="Pukall R."/>
            <person name="Klenk H.-P."/>
            <person name="Eisen J.A."/>
        </authorList>
    </citation>
    <scope>NUCLEOTIDE SEQUENCE [LARGE SCALE GENOMIC DNA]</scope>
    <source>
        <strain>DSM 17836 / JCM 10339 / NBRC 14399</strain>
    </source>
</reference>
<protein>
    <recommendedName>
        <fullName evidence="1">1D-myo-inositol 2-acetamido-2-deoxy-alpha-D-glucopyranoside deacetylase</fullName>
        <shortName evidence="1">GlcNAc-Ins deacetylase</shortName>
        <ecNumber evidence="1">3.5.1.103</ecNumber>
    </recommendedName>
    <alternativeName>
        <fullName>N-acetyl-1-D-myo-inositol 2-amino-2-deoxy-alpha-D-glucopyranoside deacetylase</fullName>
    </alternativeName>
</protein>
<accession>D2PN56</accession>
<evidence type="ECO:0000255" key="1">
    <source>
        <dbReference type="HAMAP-Rule" id="MF_01696"/>
    </source>
</evidence>
<organism>
    <name type="scientific">Kribbella flavida (strain DSM 17836 / JCM 10339 / NBRC 14399)</name>
    <dbReference type="NCBI Taxonomy" id="479435"/>
    <lineage>
        <taxon>Bacteria</taxon>
        <taxon>Bacillati</taxon>
        <taxon>Actinomycetota</taxon>
        <taxon>Actinomycetes</taxon>
        <taxon>Propionibacteriales</taxon>
        <taxon>Kribbellaceae</taxon>
        <taxon>Kribbella</taxon>
    </lineage>
</organism>
<proteinExistence type="inferred from homology"/>
<dbReference type="EC" id="3.5.1.103" evidence="1"/>
<dbReference type="EMBL" id="CP001736">
    <property type="protein sequence ID" value="ADB34540.1"/>
    <property type="molecule type" value="Genomic_DNA"/>
</dbReference>
<dbReference type="RefSeq" id="WP_012923094.1">
    <property type="nucleotide sequence ID" value="NC_013729.1"/>
</dbReference>
<dbReference type="SMR" id="D2PN56"/>
<dbReference type="STRING" id="479435.Kfla_5531"/>
<dbReference type="KEGG" id="kfl:Kfla_5531"/>
<dbReference type="eggNOG" id="COG2120">
    <property type="taxonomic scope" value="Bacteria"/>
</dbReference>
<dbReference type="HOGENOM" id="CLU_049311_2_1_11"/>
<dbReference type="OrthoDB" id="158614at2"/>
<dbReference type="Proteomes" id="UP000007967">
    <property type="component" value="Chromosome"/>
</dbReference>
<dbReference type="GO" id="GO:0035595">
    <property type="term" value="F:N-acetylglucosaminylinositol deacetylase activity"/>
    <property type="evidence" value="ECO:0007669"/>
    <property type="project" value="UniProtKB-EC"/>
</dbReference>
<dbReference type="GO" id="GO:0008270">
    <property type="term" value="F:zinc ion binding"/>
    <property type="evidence" value="ECO:0007669"/>
    <property type="project" value="UniProtKB-UniRule"/>
</dbReference>
<dbReference type="GO" id="GO:0010125">
    <property type="term" value="P:mycothiol biosynthetic process"/>
    <property type="evidence" value="ECO:0007669"/>
    <property type="project" value="UniProtKB-UniRule"/>
</dbReference>
<dbReference type="Gene3D" id="3.40.50.10320">
    <property type="entry name" value="LmbE-like"/>
    <property type="match status" value="1"/>
</dbReference>
<dbReference type="HAMAP" id="MF_01696">
    <property type="entry name" value="MshB"/>
    <property type="match status" value="1"/>
</dbReference>
<dbReference type="InterPro" id="IPR003737">
    <property type="entry name" value="GlcNAc_PI_deacetylase-related"/>
</dbReference>
<dbReference type="InterPro" id="IPR024078">
    <property type="entry name" value="LmbE-like_dom_sf"/>
</dbReference>
<dbReference type="InterPro" id="IPR017810">
    <property type="entry name" value="Mycothiol_biosynthesis_MshB"/>
</dbReference>
<dbReference type="NCBIfam" id="TIGR03445">
    <property type="entry name" value="mycothiol_MshB"/>
    <property type="match status" value="1"/>
</dbReference>
<dbReference type="PANTHER" id="PTHR12993:SF26">
    <property type="entry name" value="1D-MYO-INOSITOL 2-ACETAMIDO-2-DEOXY-ALPHA-D-GLUCOPYRANOSIDE DEACETYLASE"/>
    <property type="match status" value="1"/>
</dbReference>
<dbReference type="PANTHER" id="PTHR12993">
    <property type="entry name" value="N-ACETYLGLUCOSAMINYL-PHOSPHATIDYLINOSITOL DE-N-ACETYLASE-RELATED"/>
    <property type="match status" value="1"/>
</dbReference>
<dbReference type="Pfam" id="PF02585">
    <property type="entry name" value="PIG-L"/>
    <property type="match status" value="1"/>
</dbReference>
<dbReference type="SUPFAM" id="SSF102588">
    <property type="entry name" value="LmbE-like"/>
    <property type="match status" value="1"/>
</dbReference>